<sequence>MDIKLDPSRDDLPLMANTSHMLVKHYILDLDVDFGNQVIEGNIVLFFGDGNRFKNQSRSTQETFQMESEEADIFRTAEPCHVPEMDSSTFSPKMGHRECAVCGKGDQDAFDNDGNHDNQERDSEISSSKYCCDTGNHGKRDFLLVLDCCDLSVLKVEEVDVAAVPGLEKFTKAPKLLATPEKLRCEIVRDLVALPADAWREQLDCYTRCSQAPGCGELLIDSDNWSLRIRKTGTSTPADFPRAIRIWYKTKPEGQSVAWTTDQNGRPCVYTMGSPINNRALFPCQEPPVAMSTWQATVRAAASFVVLMSGENSAKPTPLREGYMSWHYYVTMPMPASTFAIAVGCWTEMKPKASPPDDLMTEHSLPLSPSEADLRYDNTCNHMEYPCRFQSASAASQDIIPYRVFAPVCLEGACQEALLWLIPSCLSAAHSVLGTHPFSRLDILIVPTNFPSLGMASPHIIFLSQSTLTGTSHLCGTRLCHEIAHSWFGLAIGARDWTEEWLSEGFATHLEDIFWAEAQQLPPHEALEQQELRACLRWHRLQDELRNSPEGMQVLRPNKEETGHVSASGASVVKHGLNPEKGFMQVHYLKGYFLLRFLTRTLGEKIYFPFLRKFVHLFHGQLILSQDFLQMLLENIPENKRLGLSVENIVRDWLECSGIPKALQEERKAEDCSPSRLARQVGSEVAKWIRVNRRPRKRKRGKREVAFEKLSPDQIVLLLEWLLEQKTLSPQTLHCLQQTYHLPEQDAEVRHRWCELVIKHKYTKAYNQVERFLLEDQAMGIYLYGELMVSEDARLQQLAHRCFELVKEHMDRASAQVVTEMLF</sequence>
<accession>Q8BXQ6</accession>
<accession>Q3UQZ7</accession>
<accession>Q6P0W6</accession>
<accession>Q6P394</accession>
<accession>Q8BHX5</accession>
<evidence type="ECO:0000250" key="1">
    <source>
        <dbReference type="UniProtKB" id="P15144"/>
    </source>
</evidence>
<evidence type="ECO:0000255" key="2">
    <source>
        <dbReference type="PROSITE-ProRule" id="PRU10095"/>
    </source>
</evidence>
<evidence type="ECO:0000269" key="3">
    <source>
    </source>
</evidence>
<evidence type="ECO:0000305" key="4"/>
<evidence type="ECO:0000305" key="5">
    <source>
    </source>
</evidence>
<evidence type="ECO:0000305" key="6">
    <source>
    </source>
</evidence>
<evidence type="ECO:0000305" key="7">
    <source>
    </source>
</evidence>
<organism>
    <name type="scientific">Mus musculus</name>
    <name type="common">Mouse</name>
    <dbReference type="NCBI Taxonomy" id="10090"/>
    <lineage>
        <taxon>Eukaryota</taxon>
        <taxon>Metazoa</taxon>
        <taxon>Chordata</taxon>
        <taxon>Craniata</taxon>
        <taxon>Vertebrata</taxon>
        <taxon>Euteleostomi</taxon>
        <taxon>Mammalia</taxon>
        <taxon>Eutheria</taxon>
        <taxon>Euarchontoglires</taxon>
        <taxon>Glires</taxon>
        <taxon>Rodentia</taxon>
        <taxon>Myomorpha</taxon>
        <taxon>Muroidea</taxon>
        <taxon>Muridae</taxon>
        <taxon>Murinae</taxon>
        <taxon>Mus</taxon>
        <taxon>Mus</taxon>
    </lineage>
</organism>
<feature type="chain" id="PRO_0000095092" description="Aminopeptidase O">
    <location>
        <begin position="1"/>
        <end position="823"/>
    </location>
</feature>
<feature type="short sequence motif" description="Nucleolar localization signal" evidence="3">
    <location>
        <begin position="693"/>
        <end position="703"/>
    </location>
</feature>
<feature type="active site" description="Proton acceptor" evidence="1 2">
    <location>
        <position position="482"/>
    </location>
</feature>
<feature type="binding site" evidence="1">
    <location>
        <position position="481"/>
    </location>
    <ligand>
        <name>Zn(2+)</name>
        <dbReference type="ChEBI" id="CHEBI:29105"/>
        <note>catalytic</note>
    </ligand>
</feature>
<feature type="binding site" evidence="1">
    <location>
        <position position="485"/>
    </location>
    <ligand>
        <name>Zn(2+)</name>
        <dbReference type="ChEBI" id="CHEBI:29105"/>
        <note>catalytic</note>
    </ligand>
</feature>
<feature type="binding site" evidence="1">
    <location>
        <position position="504"/>
    </location>
    <ligand>
        <name>Zn(2+)</name>
        <dbReference type="ChEBI" id="CHEBI:29105"/>
        <note>catalytic</note>
    </ligand>
</feature>
<feature type="site" description="Transition state stabilizer" evidence="1">
    <location>
        <position position="588"/>
    </location>
</feature>
<feature type="splice variant" id="VSP_061019" description="In isoform 2." evidence="4">
    <original>SPHIIFLSQSTLTGTSH</original>
    <variation>RYAAHHGMWNMLKMSRN</variation>
    <location>
        <begin position="457"/>
        <end position="473"/>
    </location>
</feature>
<feature type="splice variant" id="VSP_061020" description="In isoform 2." evidence="4">
    <location>
        <begin position="474"/>
        <end position="823"/>
    </location>
</feature>
<proteinExistence type="evidence at transcript level"/>
<keyword id="KW-0025">Alternative splicing</keyword>
<keyword id="KW-0031">Aminopeptidase</keyword>
<keyword id="KW-0963">Cytoplasm</keyword>
<keyword id="KW-0378">Hydrolase</keyword>
<keyword id="KW-0479">Metal-binding</keyword>
<keyword id="KW-0482">Metalloprotease</keyword>
<keyword id="KW-0539">Nucleus</keyword>
<keyword id="KW-0645">Protease</keyword>
<keyword id="KW-1185">Reference proteome</keyword>
<keyword id="KW-0862">Zinc</keyword>
<dbReference type="EC" id="3.4.11.-" evidence="1"/>
<dbReference type="EMBL" id="AJ810420">
    <property type="protein sequence ID" value="CAH17902.1"/>
    <property type="molecule type" value="mRNA"/>
</dbReference>
<dbReference type="EMBL" id="AK044477">
    <property type="protein sequence ID" value="BAC31943.1"/>
    <property type="molecule type" value="mRNA"/>
</dbReference>
<dbReference type="EMBL" id="AK076298">
    <property type="protein sequence ID" value="BAC36293.1"/>
    <property type="status" value="ALT_SEQ"/>
    <property type="molecule type" value="mRNA"/>
</dbReference>
<dbReference type="EMBL" id="AK141931">
    <property type="protein sequence ID" value="BAE24891.1"/>
    <property type="molecule type" value="mRNA"/>
</dbReference>
<dbReference type="EMBL" id="AC130827">
    <property type="status" value="NOT_ANNOTATED_CDS"/>
    <property type="molecule type" value="Genomic_DNA"/>
</dbReference>
<dbReference type="EMBL" id="AC154382">
    <property type="status" value="NOT_ANNOTATED_CDS"/>
    <property type="molecule type" value="Genomic_DNA"/>
</dbReference>
<dbReference type="EMBL" id="AC171004">
    <property type="status" value="NOT_ANNOTATED_CDS"/>
    <property type="molecule type" value="Genomic_DNA"/>
</dbReference>
<dbReference type="EMBL" id="CT009757">
    <property type="status" value="NOT_ANNOTATED_CDS"/>
    <property type="molecule type" value="Genomic_DNA"/>
</dbReference>
<dbReference type="EMBL" id="BC064132">
    <property type="protein sequence ID" value="AAH64132.1"/>
    <property type="molecule type" value="mRNA"/>
</dbReference>
<dbReference type="EMBL" id="BC065422">
    <property type="protein sequence ID" value="AAH65422.1"/>
    <property type="molecule type" value="mRNA"/>
</dbReference>
<dbReference type="EMBL" id="BC141279">
    <property type="protein sequence ID" value="AAI41280.1"/>
    <property type="molecule type" value="mRNA"/>
</dbReference>
<dbReference type="CCDS" id="CCDS36699.1">
    <molecule id="Q8BXQ6-1"/>
</dbReference>
<dbReference type="RefSeq" id="NP_001276853.1">
    <molecule id="Q8BXQ6-1"/>
    <property type="nucleotide sequence ID" value="NM_001289924.1"/>
</dbReference>
<dbReference type="RefSeq" id="NP_001276855.1">
    <molecule id="Q8BXQ6-1"/>
    <property type="nucleotide sequence ID" value="NM_001289926.1"/>
</dbReference>
<dbReference type="SMR" id="Q8BXQ6"/>
<dbReference type="FunCoup" id="Q8BXQ6">
    <property type="interactions" value="565"/>
</dbReference>
<dbReference type="IntAct" id="Q8BXQ6">
    <property type="interactions" value="1"/>
</dbReference>
<dbReference type="MINT" id="Q8BXQ6"/>
<dbReference type="STRING" id="10090.ENSMUSP00000089148"/>
<dbReference type="MEROPS" id="M01.028"/>
<dbReference type="iPTMnet" id="Q8BXQ6"/>
<dbReference type="PhosphoSitePlus" id="Q8BXQ6"/>
<dbReference type="PaxDb" id="10090-ENSMUSP00000089148"/>
<dbReference type="ProteomicsDB" id="281972">
    <molecule id="Q8BXQ6-1"/>
</dbReference>
<dbReference type="ProteomicsDB" id="281974">
    <molecule id="Q8BXQ6-3"/>
</dbReference>
<dbReference type="Antibodypedia" id="985">
    <property type="antibodies" value="82 antibodies from 18 providers"/>
</dbReference>
<dbReference type="DNASU" id="72061"/>
<dbReference type="Ensembl" id="ENSMUST00000091560.11">
    <molecule id="Q8BXQ6-1"/>
    <property type="protein sequence ID" value="ENSMUSP00000089148.5"/>
    <property type="gene ID" value="ENSMUSG00000021458.19"/>
</dbReference>
<dbReference type="GeneID" id="72061"/>
<dbReference type="KEGG" id="mmu:72061"/>
<dbReference type="UCSC" id="uc007qxh.1">
    <molecule id="Q8BXQ6-3"/>
    <property type="organism name" value="mouse"/>
</dbReference>
<dbReference type="UCSC" id="uc007qxi.2">
    <property type="organism name" value="mouse"/>
</dbReference>
<dbReference type="AGR" id="MGI:1919311"/>
<dbReference type="CTD" id="84909"/>
<dbReference type="MGI" id="MGI:1919311">
    <property type="gene designation" value="Aopep"/>
</dbReference>
<dbReference type="VEuPathDB" id="HostDB:ENSMUSG00000021458"/>
<dbReference type="eggNOG" id="KOG1047">
    <property type="taxonomic scope" value="Eukaryota"/>
</dbReference>
<dbReference type="GeneTree" id="ENSGT00940000155211"/>
<dbReference type="InParanoid" id="Q8BXQ6"/>
<dbReference type="OMA" id="FARCSQA"/>
<dbReference type="OrthoDB" id="79562at2759"/>
<dbReference type="TreeFam" id="TF332004"/>
<dbReference type="BioGRID-ORCS" id="72061">
    <property type="hits" value="3 hits in 77 CRISPR screens"/>
</dbReference>
<dbReference type="ChiTaRS" id="2010111I01Rik">
    <property type="organism name" value="mouse"/>
</dbReference>
<dbReference type="PRO" id="PR:Q8BXQ6"/>
<dbReference type="Proteomes" id="UP000000589">
    <property type="component" value="Chromosome 13"/>
</dbReference>
<dbReference type="RNAct" id="Q8BXQ6">
    <property type="molecule type" value="protein"/>
</dbReference>
<dbReference type="Bgee" id="ENSMUSG00000021458">
    <property type="expression patterns" value="Expressed in lip and 209 other cell types or tissues"/>
</dbReference>
<dbReference type="GO" id="GO:0005737">
    <property type="term" value="C:cytoplasm"/>
    <property type="evidence" value="ECO:0007669"/>
    <property type="project" value="UniProtKB-SubCell"/>
</dbReference>
<dbReference type="GO" id="GO:0005730">
    <property type="term" value="C:nucleolus"/>
    <property type="evidence" value="ECO:0000314"/>
    <property type="project" value="MGI"/>
</dbReference>
<dbReference type="GO" id="GO:0070006">
    <property type="term" value="F:metalloaminopeptidase activity"/>
    <property type="evidence" value="ECO:0007669"/>
    <property type="project" value="InterPro"/>
</dbReference>
<dbReference type="GO" id="GO:0008270">
    <property type="term" value="F:zinc ion binding"/>
    <property type="evidence" value="ECO:0007669"/>
    <property type="project" value="InterPro"/>
</dbReference>
<dbReference type="GO" id="GO:0006508">
    <property type="term" value="P:proteolysis"/>
    <property type="evidence" value="ECO:0007669"/>
    <property type="project" value="UniProtKB-KW"/>
</dbReference>
<dbReference type="FunFam" id="1.25.40.320:FF:000003">
    <property type="entry name" value="Aminopeptidase O isoform 1"/>
    <property type="match status" value="1"/>
</dbReference>
<dbReference type="FunFam" id="1.10.390.10:FF:000014">
    <property type="entry name" value="aminopeptidase O isoform X1"/>
    <property type="match status" value="1"/>
</dbReference>
<dbReference type="FunFam" id="2.60.40.1730:FF:000008">
    <property type="entry name" value="aminopeptidase O isoform X1"/>
    <property type="match status" value="1"/>
</dbReference>
<dbReference type="FunFam" id="3.30.2010.30:FF:000003">
    <property type="entry name" value="aminopeptidase O isoform X1"/>
    <property type="match status" value="1"/>
</dbReference>
<dbReference type="Gene3D" id="3.30.2010.30">
    <property type="match status" value="1"/>
</dbReference>
<dbReference type="Gene3D" id="1.10.390.10">
    <property type="entry name" value="Neutral Protease Domain 2"/>
    <property type="match status" value="1"/>
</dbReference>
<dbReference type="Gene3D" id="1.25.40.320">
    <property type="entry name" value="Peptidase M1, leukotriene A4 hydrolase/aminopeptidase C-terminal domain"/>
    <property type="match status" value="1"/>
</dbReference>
<dbReference type="Gene3D" id="2.60.40.1730">
    <property type="entry name" value="tricorn interacting facor f3 domain"/>
    <property type="match status" value="1"/>
</dbReference>
<dbReference type="InterPro" id="IPR042097">
    <property type="entry name" value="Aminopeptidase_N-like_N_sf"/>
</dbReference>
<dbReference type="InterPro" id="IPR033577">
    <property type="entry name" value="AOPep"/>
</dbReference>
<dbReference type="InterPro" id="IPR016024">
    <property type="entry name" value="ARM-type_fold"/>
</dbReference>
<dbReference type="InterPro" id="IPR038502">
    <property type="entry name" value="M1_LTA-4_hydro/amino_C_sf"/>
</dbReference>
<dbReference type="InterPro" id="IPR015211">
    <property type="entry name" value="Peptidase_M1_C"/>
</dbReference>
<dbReference type="InterPro" id="IPR014782">
    <property type="entry name" value="Peptidase_M1_dom"/>
</dbReference>
<dbReference type="InterPro" id="IPR027268">
    <property type="entry name" value="Peptidase_M4/M1_CTD_sf"/>
</dbReference>
<dbReference type="PANTHER" id="PTHR46627">
    <property type="entry name" value="AMINOPEPTIDASE O"/>
    <property type="match status" value="1"/>
</dbReference>
<dbReference type="PANTHER" id="PTHR46627:SF1">
    <property type="entry name" value="AMINOPEPTIDASE O"/>
    <property type="match status" value="1"/>
</dbReference>
<dbReference type="Pfam" id="PF09127">
    <property type="entry name" value="Leuk-A4-hydro_C"/>
    <property type="match status" value="1"/>
</dbReference>
<dbReference type="Pfam" id="PF01433">
    <property type="entry name" value="Peptidase_M1"/>
    <property type="match status" value="1"/>
</dbReference>
<dbReference type="SMART" id="SM01263">
    <property type="entry name" value="Leuk-A4-hydro_C"/>
    <property type="match status" value="1"/>
</dbReference>
<dbReference type="SUPFAM" id="SSF48371">
    <property type="entry name" value="ARM repeat"/>
    <property type="match status" value="1"/>
</dbReference>
<dbReference type="SUPFAM" id="SSF63737">
    <property type="entry name" value="Leukotriene A4 hydrolase N-terminal domain"/>
    <property type="match status" value="1"/>
</dbReference>
<dbReference type="SUPFAM" id="SSF55486">
    <property type="entry name" value="Metalloproteases ('zincins'), catalytic domain"/>
    <property type="match status" value="1"/>
</dbReference>
<protein>
    <recommendedName>
        <fullName>Aminopeptidase O</fullName>
        <shortName>AP-O</shortName>
        <ecNumber evidence="1">3.4.11.-</ecNumber>
    </recommendedName>
</protein>
<name>AMPO_MOUSE</name>
<reference key="1">
    <citation type="journal article" date="2005" name="Science">
        <title>The transcriptional landscape of the mammalian genome.</title>
        <authorList>
            <person name="Carninci P."/>
            <person name="Kasukawa T."/>
            <person name="Katayama S."/>
            <person name="Gough J."/>
            <person name="Frith M.C."/>
            <person name="Maeda N."/>
            <person name="Oyama R."/>
            <person name="Ravasi T."/>
            <person name="Lenhard B."/>
            <person name="Wells C."/>
            <person name="Kodzius R."/>
            <person name="Shimokawa K."/>
            <person name="Bajic V.B."/>
            <person name="Brenner S.E."/>
            <person name="Batalov S."/>
            <person name="Forrest A.R."/>
            <person name="Zavolan M."/>
            <person name="Davis M.J."/>
            <person name="Wilming L.G."/>
            <person name="Aidinis V."/>
            <person name="Allen J.E."/>
            <person name="Ambesi-Impiombato A."/>
            <person name="Apweiler R."/>
            <person name="Aturaliya R.N."/>
            <person name="Bailey T.L."/>
            <person name="Bansal M."/>
            <person name="Baxter L."/>
            <person name="Beisel K.W."/>
            <person name="Bersano T."/>
            <person name="Bono H."/>
            <person name="Chalk A.M."/>
            <person name="Chiu K.P."/>
            <person name="Choudhary V."/>
            <person name="Christoffels A."/>
            <person name="Clutterbuck D.R."/>
            <person name="Crowe M.L."/>
            <person name="Dalla E."/>
            <person name="Dalrymple B.P."/>
            <person name="de Bono B."/>
            <person name="Della Gatta G."/>
            <person name="di Bernardo D."/>
            <person name="Down T."/>
            <person name="Engstrom P."/>
            <person name="Fagiolini M."/>
            <person name="Faulkner G."/>
            <person name="Fletcher C.F."/>
            <person name="Fukushima T."/>
            <person name="Furuno M."/>
            <person name="Futaki S."/>
            <person name="Gariboldi M."/>
            <person name="Georgii-Hemming P."/>
            <person name="Gingeras T.R."/>
            <person name="Gojobori T."/>
            <person name="Green R.E."/>
            <person name="Gustincich S."/>
            <person name="Harbers M."/>
            <person name="Hayashi Y."/>
            <person name="Hensch T.K."/>
            <person name="Hirokawa N."/>
            <person name="Hill D."/>
            <person name="Huminiecki L."/>
            <person name="Iacono M."/>
            <person name="Ikeo K."/>
            <person name="Iwama A."/>
            <person name="Ishikawa T."/>
            <person name="Jakt M."/>
            <person name="Kanapin A."/>
            <person name="Katoh M."/>
            <person name="Kawasawa Y."/>
            <person name="Kelso J."/>
            <person name="Kitamura H."/>
            <person name="Kitano H."/>
            <person name="Kollias G."/>
            <person name="Krishnan S.P."/>
            <person name="Kruger A."/>
            <person name="Kummerfeld S.K."/>
            <person name="Kurochkin I.V."/>
            <person name="Lareau L.F."/>
            <person name="Lazarevic D."/>
            <person name="Lipovich L."/>
            <person name="Liu J."/>
            <person name="Liuni S."/>
            <person name="McWilliam S."/>
            <person name="Madan Babu M."/>
            <person name="Madera M."/>
            <person name="Marchionni L."/>
            <person name="Matsuda H."/>
            <person name="Matsuzawa S."/>
            <person name="Miki H."/>
            <person name="Mignone F."/>
            <person name="Miyake S."/>
            <person name="Morris K."/>
            <person name="Mottagui-Tabar S."/>
            <person name="Mulder N."/>
            <person name="Nakano N."/>
            <person name="Nakauchi H."/>
            <person name="Ng P."/>
            <person name="Nilsson R."/>
            <person name="Nishiguchi S."/>
            <person name="Nishikawa S."/>
            <person name="Nori F."/>
            <person name="Ohara O."/>
            <person name="Okazaki Y."/>
            <person name="Orlando V."/>
            <person name="Pang K.C."/>
            <person name="Pavan W.J."/>
            <person name="Pavesi G."/>
            <person name="Pesole G."/>
            <person name="Petrovsky N."/>
            <person name="Piazza S."/>
            <person name="Reed J."/>
            <person name="Reid J.F."/>
            <person name="Ring B.Z."/>
            <person name="Ringwald M."/>
            <person name="Rost B."/>
            <person name="Ruan Y."/>
            <person name="Salzberg S.L."/>
            <person name="Sandelin A."/>
            <person name="Schneider C."/>
            <person name="Schoenbach C."/>
            <person name="Sekiguchi K."/>
            <person name="Semple C.A."/>
            <person name="Seno S."/>
            <person name="Sessa L."/>
            <person name="Sheng Y."/>
            <person name="Shibata Y."/>
            <person name="Shimada H."/>
            <person name="Shimada K."/>
            <person name="Silva D."/>
            <person name="Sinclair B."/>
            <person name="Sperling S."/>
            <person name="Stupka E."/>
            <person name="Sugiura K."/>
            <person name="Sultana R."/>
            <person name="Takenaka Y."/>
            <person name="Taki K."/>
            <person name="Tammoja K."/>
            <person name="Tan S.L."/>
            <person name="Tang S."/>
            <person name="Taylor M.S."/>
            <person name="Tegner J."/>
            <person name="Teichmann S.A."/>
            <person name="Ueda H.R."/>
            <person name="van Nimwegen E."/>
            <person name="Verardo R."/>
            <person name="Wei C.L."/>
            <person name="Yagi K."/>
            <person name="Yamanishi H."/>
            <person name="Zabarovsky E."/>
            <person name="Zhu S."/>
            <person name="Zimmer A."/>
            <person name="Hide W."/>
            <person name="Bult C."/>
            <person name="Grimmond S.M."/>
            <person name="Teasdale R.D."/>
            <person name="Liu E.T."/>
            <person name="Brusic V."/>
            <person name="Quackenbush J."/>
            <person name="Wahlestedt C."/>
            <person name="Mattick J.S."/>
            <person name="Hume D.A."/>
            <person name="Kai C."/>
            <person name="Sasaki D."/>
            <person name="Tomaru Y."/>
            <person name="Fukuda S."/>
            <person name="Kanamori-Katayama M."/>
            <person name="Suzuki M."/>
            <person name="Aoki J."/>
            <person name="Arakawa T."/>
            <person name="Iida J."/>
            <person name="Imamura K."/>
            <person name="Itoh M."/>
            <person name="Kato T."/>
            <person name="Kawaji H."/>
            <person name="Kawagashira N."/>
            <person name="Kawashima T."/>
            <person name="Kojima M."/>
            <person name="Kondo S."/>
            <person name="Konno H."/>
            <person name="Nakano K."/>
            <person name="Ninomiya N."/>
            <person name="Nishio T."/>
            <person name="Okada M."/>
            <person name="Plessy C."/>
            <person name="Shibata K."/>
            <person name="Shiraki T."/>
            <person name="Suzuki S."/>
            <person name="Tagami M."/>
            <person name="Waki K."/>
            <person name="Watahiki A."/>
            <person name="Okamura-Oho Y."/>
            <person name="Suzuki H."/>
            <person name="Kawai J."/>
            <person name="Hayashizaki Y."/>
        </authorList>
    </citation>
    <scope>NUCLEOTIDE SEQUENCE [LARGE SCALE MRNA] (ISOFORMS 1 AND 2)</scope>
    <source>
        <strain>C57BL/6J</strain>
        <tissue>Retina</tissue>
        <tissue>Skin</tissue>
    </source>
</reference>
<reference key="2">
    <citation type="journal article" date="2009" name="PLoS Biol.">
        <title>Lineage-specific biology revealed by a finished genome assembly of the mouse.</title>
        <authorList>
            <person name="Church D.M."/>
            <person name="Goodstadt L."/>
            <person name="Hillier L.W."/>
            <person name="Zody M.C."/>
            <person name="Goldstein S."/>
            <person name="She X."/>
            <person name="Bult C.J."/>
            <person name="Agarwala R."/>
            <person name="Cherry J.L."/>
            <person name="DiCuccio M."/>
            <person name="Hlavina W."/>
            <person name="Kapustin Y."/>
            <person name="Meric P."/>
            <person name="Maglott D."/>
            <person name="Birtle Z."/>
            <person name="Marques A.C."/>
            <person name="Graves T."/>
            <person name="Zhou S."/>
            <person name="Teague B."/>
            <person name="Potamousis K."/>
            <person name="Churas C."/>
            <person name="Place M."/>
            <person name="Herschleb J."/>
            <person name="Runnheim R."/>
            <person name="Forrest D."/>
            <person name="Amos-Landgraf J."/>
            <person name="Schwartz D.C."/>
            <person name="Cheng Z."/>
            <person name="Lindblad-Toh K."/>
            <person name="Eichler E.E."/>
            <person name="Ponting C.P."/>
        </authorList>
    </citation>
    <scope>NUCLEOTIDE SEQUENCE [LARGE SCALE GENOMIC DNA]</scope>
    <source>
        <strain>C57BL/6J</strain>
    </source>
</reference>
<reference key="3">
    <citation type="journal article" date="2004" name="Genome Res.">
        <title>The status, quality, and expansion of the NIH full-length cDNA project: the Mammalian Gene Collection (MGC).</title>
        <authorList>
            <consortium name="The MGC Project Team"/>
        </authorList>
    </citation>
    <scope>NUCLEOTIDE SEQUENCE [LARGE SCALE MRNA] (ISOFORM 1)</scope>
    <source>
        <strain>Czech II</strain>
        <tissue>Lung</tissue>
    </source>
</reference>
<reference key="4">
    <citation type="journal article" date="2005" name="J. Biol. Chem.">
        <title>Identification of human aminopeptidase O, a novel metalloprotease with structural similarity to aminopeptidase B and leukotriene A4 hydrolase.</title>
        <authorList>
            <person name="Diaz-Perales A."/>
            <person name="Quesada V."/>
            <person name="Sanchez L.M."/>
            <person name="Ugalde A.P."/>
            <person name="Suarez M.F."/>
            <person name="Fueyo A."/>
            <person name="Lopez-Otin C."/>
        </authorList>
    </citation>
    <scope>RETRACTED PAPER</scope>
    <source>
        <strain>C57BL/6J</strain>
        <tissue>Lung</tissue>
    </source>
</reference>
<reference key="5">
    <citation type="journal article" date="2019" name="J. Biol. Chem.">
        <authorList>
            <person name="Diaz-Perales A."/>
            <person name="Quesada V."/>
            <person name="Sanchez L.M."/>
            <person name="Ugalde A.P."/>
            <person name="Suarez M.F."/>
            <person name="Fueyo A."/>
            <person name="Lopez-Otin C."/>
        </authorList>
    </citation>
    <scope>RETRACTION NOTICE OF PUBMED:15687497</scope>
</reference>
<reference key="6">
    <citation type="journal article" date="2008" name="J. Cell. Biochem.">
        <title>Aminopeptidase O contains a functional nucleolar localization signal and is implicated in vascular biology.</title>
        <authorList>
            <person name="Axton R."/>
            <person name="Wallis J.A."/>
            <person name="Taylor H."/>
            <person name="Hanks M."/>
            <person name="Forrester L.M."/>
        </authorList>
    </citation>
    <scope>ALTERNATIVE SPLICING</scope>
    <scope>SUBCELLULAR LOCATION</scope>
    <scope>TISSUE SPECIFICITY</scope>
</reference>
<gene>
    <name type="primary">Aopep</name>
    <name type="synonym">Onpep</name>
</gene>
<comment type="function">
    <text evidence="1">Aminopeptidase which catalyzes the hydrolysis of amino acid residues from the N-terminus of peptide or protein substrates.</text>
</comment>
<comment type="cofactor">
    <cofactor evidence="1">
        <name>Zn(2+)</name>
        <dbReference type="ChEBI" id="CHEBI:29105"/>
    </cofactor>
    <text evidence="1">Binds 1 zinc ion per subunit.</text>
</comment>
<comment type="subcellular location">
    <subcellularLocation>
        <location evidence="3">Nucleus</location>
        <location evidence="3">Nucleolus</location>
    </subcellularLocation>
</comment>
<comment type="subcellular location">
    <molecule>Isoform 2</molecule>
    <subcellularLocation>
        <location evidence="6">Cytoplasm</location>
    </subcellularLocation>
</comment>
<comment type="alternative products">
    <event type="alternative splicing"/>
    <isoform>
        <id>Q8BXQ6-1</id>
        <name>1</name>
        <sequence type="displayed"/>
    </isoform>
    <isoform>
        <id>Q8BXQ6-3</id>
        <name>2</name>
        <sequence type="described" ref="VSP_061019 VSP_061020"/>
    </isoform>
    <text evidence="3">Additional isoforms may exist.</text>
</comment>
<comment type="tissue specificity">
    <text evidence="3">Expressed in testis, heart, brain, lung, liver, skeletal muscle, kidney and ovary. Expressed in vascular tissues.</text>
</comment>
<comment type="similarity">
    <text evidence="4">Belongs to the peptidase M1 family.</text>
</comment>
<comment type="caution">
    <text evidence="5 7">A paper describing the expression patterns of this protein has been retracted due to concerns of image manipulation.</text>
</comment>
<comment type="sequence caution" evidence="4">
    <conflict type="miscellaneous discrepancy">
        <sequence resource="EMBL-CDS" id="BAC36293"/>
    </conflict>
    <text>Intron retention. This sequence is incomplete at the 5'-end and differs from that shown at positions 658-661.</text>
</comment>